<name>END3_PICGU</name>
<evidence type="ECO:0000250" key="1"/>
<evidence type="ECO:0000255" key="2"/>
<evidence type="ECO:0000255" key="3">
    <source>
        <dbReference type="PROSITE-ProRule" id="PRU00077"/>
    </source>
</evidence>
<evidence type="ECO:0000255" key="4">
    <source>
        <dbReference type="PROSITE-ProRule" id="PRU00448"/>
    </source>
</evidence>
<evidence type="ECO:0000256" key="5">
    <source>
        <dbReference type="SAM" id="MobiDB-lite"/>
    </source>
</evidence>
<evidence type="ECO:0000305" key="6"/>
<dbReference type="EMBL" id="CH408156">
    <property type="protein sequence ID" value="EDK37831.2"/>
    <property type="molecule type" value="Genomic_DNA"/>
</dbReference>
<dbReference type="RefSeq" id="XP_001486258.1">
    <property type="nucleotide sequence ID" value="XM_001486208.1"/>
</dbReference>
<dbReference type="FunCoup" id="A5DF78">
    <property type="interactions" value="121"/>
</dbReference>
<dbReference type="STRING" id="294746.A5DF78"/>
<dbReference type="GeneID" id="5128167"/>
<dbReference type="KEGG" id="pgu:PGUG_01929"/>
<dbReference type="VEuPathDB" id="FungiDB:PGUG_01929"/>
<dbReference type="eggNOG" id="KOG0998">
    <property type="taxonomic scope" value="Eukaryota"/>
</dbReference>
<dbReference type="HOGENOM" id="CLU_040829_0_0_1"/>
<dbReference type="InParanoid" id="A5DF78"/>
<dbReference type="OMA" id="DWLIPES"/>
<dbReference type="OrthoDB" id="1716625at2759"/>
<dbReference type="Proteomes" id="UP000001997">
    <property type="component" value="Unassembled WGS sequence"/>
</dbReference>
<dbReference type="GO" id="GO:0030479">
    <property type="term" value="C:actin cortical patch"/>
    <property type="evidence" value="ECO:0007669"/>
    <property type="project" value="UniProtKB-SubCell"/>
</dbReference>
<dbReference type="GO" id="GO:1990964">
    <property type="term" value="C:actin cytoskeleton-regulatory complex"/>
    <property type="evidence" value="ECO:0007669"/>
    <property type="project" value="EnsemblFungi"/>
</dbReference>
<dbReference type="GO" id="GO:0010008">
    <property type="term" value="C:endosome membrane"/>
    <property type="evidence" value="ECO:0007669"/>
    <property type="project" value="UniProtKB-SubCell"/>
</dbReference>
<dbReference type="GO" id="GO:0005886">
    <property type="term" value="C:plasma membrane"/>
    <property type="evidence" value="ECO:0007669"/>
    <property type="project" value="UniProtKB-SubCell"/>
</dbReference>
<dbReference type="GO" id="GO:0003779">
    <property type="term" value="F:actin binding"/>
    <property type="evidence" value="ECO:0007669"/>
    <property type="project" value="UniProtKB-KW"/>
</dbReference>
<dbReference type="GO" id="GO:0005509">
    <property type="term" value="F:calcium ion binding"/>
    <property type="evidence" value="ECO:0007669"/>
    <property type="project" value="InterPro"/>
</dbReference>
<dbReference type="GO" id="GO:0030674">
    <property type="term" value="F:protein-macromolecule adaptor activity"/>
    <property type="evidence" value="ECO:0007669"/>
    <property type="project" value="EnsemblFungi"/>
</dbReference>
<dbReference type="GO" id="GO:0007015">
    <property type="term" value="P:actin filament organization"/>
    <property type="evidence" value="ECO:0007669"/>
    <property type="project" value="InterPro"/>
</dbReference>
<dbReference type="GO" id="GO:0030476">
    <property type="term" value="P:ascospore wall assembly"/>
    <property type="evidence" value="ECO:0007669"/>
    <property type="project" value="EnsemblFungi"/>
</dbReference>
<dbReference type="GO" id="GO:0006897">
    <property type="term" value="P:endocytosis"/>
    <property type="evidence" value="ECO:0007669"/>
    <property type="project" value="UniProtKB-KW"/>
</dbReference>
<dbReference type="GO" id="GO:0016197">
    <property type="term" value="P:endosomal transport"/>
    <property type="evidence" value="ECO:0007669"/>
    <property type="project" value="TreeGrafter"/>
</dbReference>
<dbReference type="GO" id="GO:0061709">
    <property type="term" value="P:reticulophagy"/>
    <property type="evidence" value="ECO:0007669"/>
    <property type="project" value="EnsemblFungi"/>
</dbReference>
<dbReference type="CDD" id="cd00052">
    <property type="entry name" value="EH"/>
    <property type="match status" value="1"/>
</dbReference>
<dbReference type="Gene3D" id="1.10.238.10">
    <property type="entry name" value="EF-hand"/>
    <property type="match status" value="2"/>
</dbReference>
<dbReference type="InterPro" id="IPR011992">
    <property type="entry name" value="EF-hand-dom_pair"/>
</dbReference>
<dbReference type="InterPro" id="IPR018247">
    <property type="entry name" value="EF_Hand_1_Ca_BS"/>
</dbReference>
<dbReference type="InterPro" id="IPR002048">
    <property type="entry name" value="EF_hand_dom"/>
</dbReference>
<dbReference type="InterPro" id="IPR000261">
    <property type="entry name" value="EH_dom"/>
</dbReference>
<dbReference type="InterPro" id="IPR025604">
    <property type="entry name" value="End3"/>
</dbReference>
<dbReference type="PANTHER" id="PTHR11216:SF74">
    <property type="entry name" value="ACTIN CYTOSKELETON-REGULATORY COMPLEX PROTEIN END3"/>
    <property type="match status" value="1"/>
</dbReference>
<dbReference type="PANTHER" id="PTHR11216">
    <property type="entry name" value="EH DOMAIN"/>
    <property type="match status" value="1"/>
</dbReference>
<dbReference type="Pfam" id="PF12763">
    <property type="entry name" value="EH"/>
    <property type="match status" value="1"/>
</dbReference>
<dbReference type="Pfam" id="PF12761">
    <property type="entry name" value="End3"/>
    <property type="match status" value="1"/>
</dbReference>
<dbReference type="SMART" id="SM00054">
    <property type="entry name" value="EFh"/>
    <property type="match status" value="1"/>
</dbReference>
<dbReference type="SMART" id="SM00027">
    <property type="entry name" value="EH"/>
    <property type="match status" value="2"/>
</dbReference>
<dbReference type="SUPFAM" id="SSF47473">
    <property type="entry name" value="EF-hand"/>
    <property type="match status" value="2"/>
</dbReference>
<dbReference type="PROSITE" id="PS00018">
    <property type="entry name" value="EF_HAND_1"/>
    <property type="match status" value="1"/>
</dbReference>
<dbReference type="PROSITE" id="PS50222">
    <property type="entry name" value="EF_HAND_2"/>
    <property type="match status" value="1"/>
</dbReference>
<dbReference type="PROSITE" id="PS50031">
    <property type="entry name" value="EH"/>
    <property type="match status" value="2"/>
</dbReference>
<keyword id="KW-0009">Actin-binding</keyword>
<keyword id="KW-0106">Calcium</keyword>
<keyword id="KW-1003">Cell membrane</keyword>
<keyword id="KW-0175">Coiled coil</keyword>
<keyword id="KW-0963">Cytoplasm</keyword>
<keyword id="KW-0206">Cytoskeleton</keyword>
<keyword id="KW-0254">Endocytosis</keyword>
<keyword id="KW-0967">Endosome</keyword>
<keyword id="KW-0472">Membrane</keyword>
<keyword id="KW-0479">Metal-binding</keyword>
<keyword id="KW-1185">Reference proteome</keyword>
<keyword id="KW-0677">Repeat</keyword>
<accession>A5DF78</accession>
<sequence>MPQLEEWEIKKYWEIFQGLKPQDNKLSGSKVSPVLKNSQLPQDKLSKIWELSDIDSDGNLDFEEFCIAMRLIFDIVNGSQSDVPAELPGWLIPASKAYLIQANRAVATGNNQYDGGRSSNDDEEDEELLSDDFDWYISPTDKATYESIYNSNSDSYGRVRFQSLEGLYQTLTKVPKESISSAWNLVNPKSFETIDKDQTLVFLHILNQRENGKRVPHGVPASLRATFSKETPSYDLSESVPQVSSPTSANNKKAFGESYLQKVGRSTTNERGTDFSATEGTDWEEVRLRRELANLEDLLNKTSKESSTTQTNELGVTKHEYEQLLKYKEEQLKVKPDKNLTDVKNDIELIEGQVRELEQYYARKQAELQQLDQEIAQLS</sequence>
<protein>
    <recommendedName>
        <fullName>Actin cytoskeleton-regulatory complex protein END3</fullName>
    </recommendedName>
    <alternativeName>
        <fullName>Endocytosis protein 3</fullName>
    </alternativeName>
</protein>
<proteinExistence type="inferred from homology"/>
<gene>
    <name type="primary">END3</name>
    <name type="ORF">PGUG_01929</name>
</gene>
<reference key="1">
    <citation type="journal article" date="2009" name="Nature">
        <title>Evolution of pathogenicity and sexual reproduction in eight Candida genomes.</title>
        <authorList>
            <person name="Butler G."/>
            <person name="Rasmussen M.D."/>
            <person name="Lin M.F."/>
            <person name="Santos M.A.S."/>
            <person name="Sakthikumar S."/>
            <person name="Munro C.A."/>
            <person name="Rheinbay E."/>
            <person name="Grabherr M."/>
            <person name="Forche A."/>
            <person name="Reedy J.L."/>
            <person name="Agrafioti I."/>
            <person name="Arnaud M.B."/>
            <person name="Bates S."/>
            <person name="Brown A.J.P."/>
            <person name="Brunke S."/>
            <person name="Costanzo M.C."/>
            <person name="Fitzpatrick D.A."/>
            <person name="de Groot P.W.J."/>
            <person name="Harris D."/>
            <person name="Hoyer L.L."/>
            <person name="Hube B."/>
            <person name="Klis F.M."/>
            <person name="Kodira C."/>
            <person name="Lennard N."/>
            <person name="Logue M.E."/>
            <person name="Martin R."/>
            <person name="Neiman A.M."/>
            <person name="Nikolaou E."/>
            <person name="Quail M.A."/>
            <person name="Quinn J."/>
            <person name="Santos M.C."/>
            <person name="Schmitzberger F.F."/>
            <person name="Sherlock G."/>
            <person name="Shah P."/>
            <person name="Silverstein K.A.T."/>
            <person name="Skrzypek M.S."/>
            <person name="Soll D."/>
            <person name="Staggs R."/>
            <person name="Stansfield I."/>
            <person name="Stumpf M.P.H."/>
            <person name="Sudbery P.E."/>
            <person name="Srikantha T."/>
            <person name="Zeng Q."/>
            <person name="Berman J."/>
            <person name="Berriman M."/>
            <person name="Heitman J."/>
            <person name="Gow N.A.R."/>
            <person name="Lorenz M.C."/>
            <person name="Birren B.W."/>
            <person name="Kellis M."/>
            <person name="Cuomo C.A."/>
        </authorList>
    </citation>
    <scope>NUCLEOTIDE SEQUENCE [LARGE SCALE GENOMIC DNA]</scope>
    <source>
        <strain>ATCC 6260 / CBS 566 / DSM 6381 / JCM 1539 / NBRC 10279 / NRRL Y-324</strain>
    </source>
</reference>
<organism>
    <name type="scientific">Meyerozyma guilliermondii (strain ATCC 6260 / CBS 566 / DSM 6381 / JCM 1539 / NBRC 10279 / NRRL Y-324)</name>
    <name type="common">Yeast</name>
    <name type="synonym">Candida guilliermondii</name>
    <dbReference type="NCBI Taxonomy" id="294746"/>
    <lineage>
        <taxon>Eukaryota</taxon>
        <taxon>Fungi</taxon>
        <taxon>Dikarya</taxon>
        <taxon>Ascomycota</taxon>
        <taxon>Saccharomycotina</taxon>
        <taxon>Pichiomycetes</taxon>
        <taxon>Debaryomycetaceae</taxon>
        <taxon>Meyerozyma</taxon>
    </lineage>
</organism>
<feature type="chain" id="PRO_0000349454" description="Actin cytoskeleton-regulatory complex protein END3">
    <location>
        <begin position="1"/>
        <end position="379"/>
    </location>
</feature>
<feature type="domain" description="EH 1" evidence="3">
    <location>
        <begin position="8"/>
        <end position="98"/>
    </location>
</feature>
<feature type="domain" description="EF-hand" evidence="4">
    <location>
        <begin position="40"/>
        <end position="75"/>
    </location>
</feature>
<feature type="domain" description="EH 2" evidence="3">
    <location>
        <begin position="141"/>
        <end position="230"/>
    </location>
</feature>
<feature type="region of interest" description="Disordered" evidence="5">
    <location>
        <begin position="235"/>
        <end position="276"/>
    </location>
</feature>
<feature type="coiled-coil region" evidence="2">
    <location>
        <begin position="281"/>
        <end position="379"/>
    </location>
</feature>
<feature type="compositionally biased region" description="Polar residues" evidence="5">
    <location>
        <begin position="235"/>
        <end position="251"/>
    </location>
</feature>
<feature type="compositionally biased region" description="Polar residues" evidence="5">
    <location>
        <begin position="264"/>
        <end position="276"/>
    </location>
</feature>
<feature type="binding site" evidence="4">
    <location>
        <position position="53"/>
    </location>
    <ligand>
        <name>Ca(2+)</name>
        <dbReference type="ChEBI" id="CHEBI:29108"/>
    </ligand>
</feature>
<feature type="binding site" evidence="4">
    <location>
        <position position="55"/>
    </location>
    <ligand>
        <name>Ca(2+)</name>
        <dbReference type="ChEBI" id="CHEBI:29108"/>
    </ligand>
</feature>
<feature type="binding site" evidence="4">
    <location>
        <position position="57"/>
    </location>
    <ligand>
        <name>Ca(2+)</name>
        <dbReference type="ChEBI" id="CHEBI:29108"/>
    </ligand>
</feature>
<feature type="binding site" evidence="4">
    <location>
        <position position="59"/>
    </location>
    <ligand>
        <name>Ca(2+)</name>
        <dbReference type="ChEBI" id="CHEBI:29108"/>
    </ligand>
</feature>
<feature type="binding site" evidence="4">
    <location>
        <position position="64"/>
    </location>
    <ligand>
        <name>Ca(2+)</name>
        <dbReference type="ChEBI" id="CHEBI:29108"/>
    </ligand>
</feature>
<comment type="function">
    <text evidence="1">Component of the PAN1 actin cytoskeleton-regulatory complex required for the internalization of endosomes during actin-coupled endocytosis. The complex links the site of endocytosis to the cell membrane-associated actin cytoskeleton. Mediates uptake of external molecules and vacuolar degradation of plasma membrane proteins. Plays a role in the proper organization of the cell membrane-associated actin cytoskeleton and promotes its destabilization (By similarity).</text>
</comment>
<comment type="subunit">
    <text evidence="1">Component of the PAN1 actin cytoskeleton-regulatory complex.</text>
</comment>
<comment type="subcellular location">
    <subcellularLocation>
        <location evidence="1">Cell membrane</location>
        <topology evidence="1">Peripheral membrane protein</topology>
        <orientation evidence="1">Cytoplasmic side</orientation>
    </subcellularLocation>
    <subcellularLocation>
        <location evidence="1">Endosome membrane</location>
        <topology evidence="1">Peripheral membrane protein</topology>
        <orientation evidence="1">Cytoplasmic side</orientation>
    </subcellularLocation>
    <subcellularLocation>
        <location evidence="1">Cytoplasm</location>
        <location evidence="1">Cytoskeleton</location>
        <location evidence="1">Actin patch</location>
    </subcellularLocation>
    <text evidence="1">Cytoplasmic and cortical actin patches.</text>
</comment>
<comment type="similarity">
    <text evidence="6">Belongs to the END3 family.</text>
</comment>